<protein>
    <recommendedName>
        <fullName>Inhibin beta E chain</fullName>
    </recommendedName>
    <alternativeName>
        <fullName>Activin beta-E chain</fullName>
    </alternativeName>
</protein>
<evidence type="ECO:0000250" key="1"/>
<evidence type="ECO:0000250" key="2">
    <source>
        <dbReference type="UniProtKB" id="O08717"/>
    </source>
</evidence>
<evidence type="ECO:0000250" key="3">
    <source>
        <dbReference type="UniProtKB" id="P08476"/>
    </source>
</evidence>
<evidence type="ECO:0000255" key="4"/>
<evidence type="ECO:0000269" key="5">
    <source>
    </source>
</evidence>
<evidence type="ECO:0000269" key="6">
    <source>
    </source>
</evidence>
<evidence type="ECO:0000269" key="7">
    <source>
    </source>
</evidence>
<evidence type="ECO:0000305" key="8"/>
<sequence length="350" mass="38561">MRLPDVQLWLVLLWALVRAQGTGSVCPSCGGSKLAPQAERALVLELAKQQILDGLHLTSRPRITHPPPQAALTRALRRLQPGSVAPGNGEEVISFATVTDSTSAYSSLLTFHLSTPRSHHLYHARLWLHVLPTLPGTLCLRIFRWGPRRRRQGSRTLLAEHHITNLGWHTLTLPSSGLRGEKSGVLKLQLDCRPLEGNSTVTGQPRRLLDTAGHQQPFLELKIRANEPGAGRARRRTPTCEPATPLCCRRDHYVDFQELGWRDWILQPEGYQLNYCSGQCPPHLAGSPGIAASFHSAVFSLLKANNPWPASTSCCVPTARRPLSLLYLDHNGNVVKTDVPDMVVEACGCS</sequence>
<comment type="function">
    <text>Inhibins and activins inhibit and activate, respectively, the secretion of follitropin by the pituitary gland. Inhibins/activins are involved in regulating a number of diverse functions such as hypothalamic and pituitary hormone secretion, gonadal hormone secretion, germ cell development and maturation, erythroid differentiation, insulin secretion, nerve cell survival, embryonic axial development or bone growth, depending on their subunit composition. Inhibins appear to oppose the functions of activins.</text>
</comment>
<comment type="function">
    <text evidence="2 7">Activin E is a homodimer of INHBE secreted by the liver that plays a crucial role in regulating metabolic homeostasis particularly in lipid metabolism and energy homeostasis. Plays a central role in the regulation of adipose tissue lipolysis by preventing the influx of fatty acids from adipose tissue into the liver. Mechanistically, signals via ACVR1C to activate SMAD2/3 signaling, suppressing PPARG target genes in adipose tissue, thereby reducing liver lipid content and improving glycemic control (PubMed:38533769). Induces beige adipocyte formation and thermogenesis in response to cold exposure (By similarity).</text>
</comment>
<comment type="subunit">
    <text evidence="3">Homodimeric or heterodimeric through association with alpha and beta subunits, linked by one or more disulfide bonds (PubMed:38533769). Inhibins are heterodimers of one alpha and one beta subunit. Activins are homo- or heterodimers of beta subunits only (By similarity).</text>
</comment>
<comment type="subcellular location">
    <subcellularLocation>
        <location evidence="1">Secreted</location>
    </subcellularLocation>
</comment>
<comment type="similarity">
    <text evidence="8">Belongs to the TGF-beta family.</text>
</comment>
<proteinExistence type="evidence at protein level"/>
<accession>P58166</accession>
<reference key="1">
    <citation type="journal article" date="2002" name="Mol. Cell. Endocrinol.">
        <title>cDNA cloning and expression of human activin betaE subunit.</title>
        <authorList>
            <person name="Hashimoto O."/>
            <person name="Tsuchida K."/>
            <person name="Ushiro Y."/>
            <person name="Hosoi Y."/>
            <person name="Hoshi N."/>
            <person name="Sugino H."/>
            <person name="Hasegawa Y."/>
        </authorList>
    </citation>
    <scope>NUCLEOTIDE SEQUENCE [MRNA]</scope>
    <source>
        <tissue>Liver</tissue>
    </source>
</reference>
<reference key="2">
    <citation type="journal article" date="2004" name="Nat. Genet.">
        <title>Complete sequencing and characterization of 21,243 full-length human cDNAs.</title>
        <authorList>
            <person name="Ota T."/>
            <person name="Suzuki Y."/>
            <person name="Nishikawa T."/>
            <person name="Otsuki T."/>
            <person name="Sugiyama T."/>
            <person name="Irie R."/>
            <person name="Wakamatsu A."/>
            <person name="Hayashi K."/>
            <person name="Sato H."/>
            <person name="Nagai K."/>
            <person name="Kimura K."/>
            <person name="Makita H."/>
            <person name="Sekine M."/>
            <person name="Obayashi M."/>
            <person name="Nishi T."/>
            <person name="Shibahara T."/>
            <person name="Tanaka T."/>
            <person name="Ishii S."/>
            <person name="Yamamoto J."/>
            <person name="Saito K."/>
            <person name="Kawai Y."/>
            <person name="Isono Y."/>
            <person name="Nakamura Y."/>
            <person name="Nagahari K."/>
            <person name="Murakami K."/>
            <person name="Yasuda T."/>
            <person name="Iwayanagi T."/>
            <person name="Wagatsuma M."/>
            <person name="Shiratori A."/>
            <person name="Sudo H."/>
            <person name="Hosoiri T."/>
            <person name="Kaku Y."/>
            <person name="Kodaira H."/>
            <person name="Kondo H."/>
            <person name="Sugawara M."/>
            <person name="Takahashi M."/>
            <person name="Kanda K."/>
            <person name="Yokoi T."/>
            <person name="Furuya T."/>
            <person name="Kikkawa E."/>
            <person name="Omura Y."/>
            <person name="Abe K."/>
            <person name="Kamihara K."/>
            <person name="Katsuta N."/>
            <person name="Sato K."/>
            <person name="Tanikawa M."/>
            <person name="Yamazaki M."/>
            <person name="Ninomiya K."/>
            <person name="Ishibashi T."/>
            <person name="Yamashita H."/>
            <person name="Murakawa K."/>
            <person name="Fujimori K."/>
            <person name="Tanai H."/>
            <person name="Kimata M."/>
            <person name="Watanabe M."/>
            <person name="Hiraoka S."/>
            <person name="Chiba Y."/>
            <person name="Ishida S."/>
            <person name="Ono Y."/>
            <person name="Takiguchi S."/>
            <person name="Watanabe S."/>
            <person name="Yosida M."/>
            <person name="Hotuta T."/>
            <person name="Kusano J."/>
            <person name="Kanehori K."/>
            <person name="Takahashi-Fujii A."/>
            <person name="Hara H."/>
            <person name="Tanase T.-O."/>
            <person name="Nomura Y."/>
            <person name="Togiya S."/>
            <person name="Komai F."/>
            <person name="Hara R."/>
            <person name="Takeuchi K."/>
            <person name="Arita M."/>
            <person name="Imose N."/>
            <person name="Musashino K."/>
            <person name="Yuuki H."/>
            <person name="Oshima A."/>
            <person name="Sasaki N."/>
            <person name="Aotsuka S."/>
            <person name="Yoshikawa Y."/>
            <person name="Matsunawa H."/>
            <person name="Ichihara T."/>
            <person name="Shiohata N."/>
            <person name="Sano S."/>
            <person name="Moriya S."/>
            <person name="Momiyama H."/>
            <person name="Satoh N."/>
            <person name="Takami S."/>
            <person name="Terashima Y."/>
            <person name="Suzuki O."/>
            <person name="Nakagawa S."/>
            <person name="Senoh A."/>
            <person name="Mizoguchi H."/>
            <person name="Goto Y."/>
            <person name="Shimizu F."/>
            <person name="Wakebe H."/>
            <person name="Hishigaki H."/>
            <person name="Watanabe T."/>
            <person name="Sugiyama A."/>
            <person name="Takemoto M."/>
            <person name="Kawakami B."/>
            <person name="Yamazaki M."/>
            <person name="Watanabe K."/>
            <person name="Kumagai A."/>
            <person name="Itakura S."/>
            <person name="Fukuzumi Y."/>
            <person name="Fujimori Y."/>
            <person name="Komiyama M."/>
            <person name="Tashiro H."/>
            <person name="Tanigami A."/>
            <person name="Fujiwara T."/>
            <person name="Ono T."/>
            <person name="Yamada K."/>
            <person name="Fujii Y."/>
            <person name="Ozaki K."/>
            <person name="Hirao M."/>
            <person name="Ohmori Y."/>
            <person name="Kawabata A."/>
            <person name="Hikiji T."/>
            <person name="Kobatake N."/>
            <person name="Inagaki H."/>
            <person name="Ikema Y."/>
            <person name="Okamoto S."/>
            <person name="Okitani R."/>
            <person name="Kawakami T."/>
            <person name="Noguchi S."/>
            <person name="Itoh T."/>
            <person name="Shigeta K."/>
            <person name="Senba T."/>
            <person name="Matsumura K."/>
            <person name="Nakajima Y."/>
            <person name="Mizuno T."/>
            <person name="Morinaga M."/>
            <person name="Sasaki M."/>
            <person name="Togashi T."/>
            <person name="Oyama M."/>
            <person name="Hata H."/>
            <person name="Watanabe M."/>
            <person name="Komatsu T."/>
            <person name="Mizushima-Sugano J."/>
            <person name="Satoh T."/>
            <person name="Shirai Y."/>
            <person name="Takahashi Y."/>
            <person name="Nakagawa K."/>
            <person name="Okumura K."/>
            <person name="Nagase T."/>
            <person name="Nomura N."/>
            <person name="Kikuchi H."/>
            <person name="Masuho Y."/>
            <person name="Yamashita R."/>
            <person name="Nakai K."/>
            <person name="Yada T."/>
            <person name="Nakamura Y."/>
            <person name="Ohara O."/>
            <person name="Isogai T."/>
            <person name="Sugano S."/>
        </authorList>
    </citation>
    <scope>NUCLEOTIDE SEQUENCE [LARGE SCALE MRNA]</scope>
</reference>
<reference key="3">
    <citation type="journal article" date="2004" name="Genome Res.">
        <title>The status, quality, and expansion of the NIH full-length cDNA project: the Mammalian Gene Collection (MGC).</title>
        <authorList>
            <consortium name="The MGC Project Team"/>
        </authorList>
    </citation>
    <scope>NUCLEOTIDE SEQUENCE [LARGE SCALE MRNA]</scope>
    <source>
        <tissue>Muscle</tissue>
    </source>
</reference>
<reference key="4">
    <citation type="journal article" date="2009" name="J. Proteome Res.">
        <title>Glycoproteomics analysis of human liver tissue by combination of multiple enzyme digestion and hydrazide chemistry.</title>
        <authorList>
            <person name="Chen R."/>
            <person name="Jiang X."/>
            <person name="Sun D."/>
            <person name="Han G."/>
            <person name="Wang F."/>
            <person name="Ye M."/>
            <person name="Wang L."/>
            <person name="Zou H."/>
        </authorList>
    </citation>
    <scope>GLYCOSYLATION [LARGE SCALE ANALYSIS] AT ASN-198</scope>
    <source>
        <tissue>Liver</tissue>
    </source>
</reference>
<reference key="5">
    <citation type="journal article" date="2014" name="J. Proteomics">
        <title>An enzyme assisted RP-RPLC approach for in-depth analysis of human liver phosphoproteome.</title>
        <authorList>
            <person name="Bian Y."/>
            <person name="Song C."/>
            <person name="Cheng K."/>
            <person name="Dong M."/>
            <person name="Wang F."/>
            <person name="Huang J."/>
            <person name="Sun D."/>
            <person name="Wang L."/>
            <person name="Ye M."/>
            <person name="Zou H."/>
        </authorList>
    </citation>
    <scope>IDENTIFICATION BY MASS SPECTROMETRY [LARGE SCALE ANALYSIS]</scope>
    <source>
        <tissue>Liver</tissue>
    </source>
</reference>
<reference key="6">
    <citation type="journal article" date="2024" name="Biochem. J.">
        <title>Activin E is a transforming growth factor beta ligand that signals specifically through activin receptor-like kinase 7.</title>
        <authorList>
            <person name="Vestal K.A."/>
            <person name="Kattamuri C."/>
            <person name="Koyiloth M."/>
            <person name="Ongaro L."/>
            <person name="Howard J.A."/>
            <person name="Deaton A.M."/>
            <person name="Ticau S."/>
            <person name="Dubey A."/>
            <person name="Bernard D.J."/>
            <person name="Thompson T.B."/>
        </authorList>
    </citation>
    <scope>FUNCTION</scope>
    <scope>SUBUNIT</scope>
</reference>
<reference key="7">
    <citation type="journal article" date="2006" name="Science">
        <title>The consensus coding sequences of human breast and colorectal cancers.</title>
        <authorList>
            <person name="Sjoeblom T."/>
            <person name="Jones S."/>
            <person name="Wood L.D."/>
            <person name="Parsons D.W."/>
            <person name="Lin J."/>
            <person name="Barber T.D."/>
            <person name="Mandelker D."/>
            <person name="Leary R.J."/>
            <person name="Ptak J."/>
            <person name="Silliman N."/>
            <person name="Szabo S."/>
            <person name="Buckhaults P."/>
            <person name="Farrell C."/>
            <person name="Meeh P."/>
            <person name="Markowitz S.D."/>
            <person name="Willis J."/>
            <person name="Dawson D."/>
            <person name="Willson J.K.V."/>
            <person name="Gazdar A.F."/>
            <person name="Hartigan J."/>
            <person name="Wu L."/>
            <person name="Liu C."/>
            <person name="Parmigiani G."/>
            <person name="Park B.H."/>
            <person name="Bachman K.E."/>
            <person name="Papadopoulos N."/>
            <person name="Vogelstein B."/>
            <person name="Kinzler K.W."/>
            <person name="Velculescu V.E."/>
        </authorList>
    </citation>
    <scope>VARIANTS [LARGE SCALE ANALYSIS] THR-62 AND HIS-215</scope>
</reference>
<gene>
    <name type="primary">INHBE</name>
</gene>
<name>INHBE_HUMAN</name>
<dbReference type="EMBL" id="AF412024">
    <property type="protein sequence ID" value="AAN03682.1"/>
    <property type="molecule type" value="mRNA"/>
</dbReference>
<dbReference type="EMBL" id="AK075285">
    <property type="protein sequence ID" value="BAC11521.1"/>
    <property type="molecule type" value="mRNA"/>
</dbReference>
<dbReference type="EMBL" id="BC005161">
    <property type="protein sequence ID" value="AAH05161.1"/>
    <property type="molecule type" value="mRNA"/>
</dbReference>
<dbReference type="CCDS" id="CCDS8939.1"/>
<dbReference type="RefSeq" id="NP_113667.1">
    <property type="nucleotide sequence ID" value="NM_031479.5"/>
</dbReference>
<dbReference type="SMR" id="P58166"/>
<dbReference type="BioGRID" id="123742">
    <property type="interactions" value="48"/>
</dbReference>
<dbReference type="FunCoup" id="P58166">
    <property type="interactions" value="578"/>
</dbReference>
<dbReference type="IntAct" id="P58166">
    <property type="interactions" value="41"/>
</dbReference>
<dbReference type="STRING" id="9606.ENSP00000266646"/>
<dbReference type="GlyConnect" id="2094">
    <property type="glycosylation" value="3 N-Linked glycans (1 site)"/>
</dbReference>
<dbReference type="GlyCosmos" id="P58166">
    <property type="glycosylation" value="2 sites, 4 glycans"/>
</dbReference>
<dbReference type="GlyGen" id="P58166">
    <property type="glycosylation" value="3 sites, 10 N-linked glycans (1 site), 2 O-linked glycans (2 sites)"/>
</dbReference>
<dbReference type="iPTMnet" id="P58166"/>
<dbReference type="PhosphoSitePlus" id="P58166"/>
<dbReference type="BioMuta" id="INHBE"/>
<dbReference type="DMDM" id="14285500"/>
<dbReference type="jPOST" id="P58166"/>
<dbReference type="MassIVE" id="P58166"/>
<dbReference type="PaxDb" id="9606-ENSP00000266646"/>
<dbReference type="PeptideAtlas" id="P58166"/>
<dbReference type="ProteomicsDB" id="57050"/>
<dbReference type="Antibodypedia" id="16213">
    <property type="antibodies" value="136 antibodies from 19 providers"/>
</dbReference>
<dbReference type="DNASU" id="83729"/>
<dbReference type="Ensembl" id="ENST00000266646.3">
    <property type="protein sequence ID" value="ENSP00000266646.2"/>
    <property type="gene ID" value="ENSG00000139269.3"/>
</dbReference>
<dbReference type="GeneID" id="83729"/>
<dbReference type="KEGG" id="hsa:83729"/>
<dbReference type="MANE-Select" id="ENST00000266646.3">
    <property type="protein sequence ID" value="ENSP00000266646.2"/>
    <property type="RefSeq nucleotide sequence ID" value="NM_031479.5"/>
    <property type="RefSeq protein sequence ID" value="NP_113667.1"/>
</dbReference>
<dbReference type="UCSC" id="uc001snw.4">
    <property type="organism name" value="human"/>
</dbReference>
<dbReference type="AGR" id="HGNC:24029"/>
<dbReference type="CTD" id="83729"/>
<dbReference type="DisGeNET" id="83729"/>
<dbReference type="GeneCards" id="INHBE"/>
<dbReference type="HGNC" id="HGNC:24029">
    <property type="gene designation" value="INHBE"/>
</dbReference>
<dbReference type="HPA" id="ENSG00000139269">
    <property type="expression patterns" value="Tissue enriched (liver)"/>
</dbReference>
<dbReference type="MIM" id="612031">
    <property type="type" value="gene"/>
</dbReference>
<dbReference type="neXtProt" id="NX_P58166"/>
<dbReference type="OpenTargets" id="ENSG00000139269"/>
<dbReference type="PharmGKB" id="PA134898991"/>
<dbReference type="VEuPathDB" id="HostDB:ENSG00000139269"/>
<dbReference type="eggNOG" id="KOG3900">
    <property type="taxonomic scope" value="Eukaryota"/>
</dbReference>
<dbReference type="GeneTree" id="ENSGT00940000162107"/>
<dbReference type="HOGENOM" id="CLU_020515_5_0_1"/>
<dbReference type="InParanoid" id="P58166"/>
<dbReference type="OMA" id="ETPLCCR"/>
<dbReference type="OrthoDB" id="6516235at2759"/>
<dbReference type="PAN-GO" id="P58166">
    <property type="GO annotations" value="4 GO annotations based on evolutionary models"/>
</dbReference>
<dbReference type="PhylomeDB" id="P58166"/>
<dbReference type="TreeFam" id="TF318514"/>
<dbReference type="PathwayCommons" id="P58166"/>
<dbReference type="Reactome" id="R-HSA-209822">
    <property type="pathway name" value="Glycoprotein hormones"/>
</dbReference>
<dbReference type="SignaLink" id="P58166"/>
<dbReference type="SIGNOR" id="P58166"/>
<dbReference type="BioGRID-ORCS" id="83729">
    <property type="hits" value="72 hits in 1157 CRISPR screens"/>
</dbReference>
<dbReference type="ChiTaRS" id="INHBE">
    <property type="organism name" value="human"/>
</dbReference>
<dbReference type="GenomeRNAi" id="83729"/>
<dbReference type="Pharos" id="P58166">
    <property type="development level" value="Tbio"/>
</dbReference>
<dbReference type="PRO" id="PR:P58166"/>
<dbReference type="Proteomes" id="UP000005640">
    <property type="component" value="Chromosome 12"/>
</dbReference>
<dbReference type="RNAct" id="P58166">
    <property type="molecule type" value="protein"/>
</dbReference>
<dbReference type="Bgee" id="ENSG00000139269">
    <property type="expression patterns" value="Expressed in right lobe of liver and 82 other cell types or tissues"/>
</dbReference>
<dbReference type="ExpressionAtlas" id="P58166">
    <property type="expression patterns" value="baseline and differential"/>
</dbReference>
<dbReference type="GO" id="GO:0062023">
    <property type="term" value="C:collagen-containing extracellular matrix"/>
    <property type="evidence" value="ECO:0007005"/>
    <property type="project" value="BHF-UCL"/>
</dbReference>
<dbReference type="GO" id="GO:0005615">
    <property type="term" value="C:extracellular space"/>
    <property type="evidence" value="ECO:0000318"/>
    <property type="project" value="GO_Central"/>
</dbReference>
<dbReference type="GO" id="GO:0005125">
    <property type="term" value="F:cytokine activity"/>
    <property type="evidence" value="ECO:0000250"/>
    <property type="project" value="UniProtKB"/>
</dbReference>
<dbReference type="GO" id="GO:0008083">
    <property type="term" value="F:growth factor activity"/>
    <property type="evidence" value="ECO:0007669"/>
    <property type="project" value="UniProtKB-KW"/>
</dbReference>
<dbReference type="GO" id="GO:0005179">
    <property type="term" value="F:hormone activity"/>
    <property type="evidence" value="ECO:0007669"/>
    <property type="project" value="UniProtKB-KW"/>
</dbReference>
<dbReference type="GO" id="GO:1904178">
    <property type="term" value="P:negative regulation of adipose tissue development"/>
    <property type="evidence" value="ECO:0000250"/>
    <property type="project" value="UniProtKB"/>
</dbReference>
<dbReference type="CDD" id="cd19406">
    <property type="entry name" value="TGF_beta_INHBC_E"/>
    <property type="match status" value="1"/>
</dbReference>
<dbReference type="FunFam" id="2.10.90.10:FF:000005">
    <property type="entry name" value="Inhibin beta A chain"/>
    <property type="match status" value="1"/>
</dbReference>
<dbReference type="Gene3D" id="2.10.90.10">
    <property type="entry name" value="Cystine-knot cytokines"/>
    <property type="match status" value="1"/>
</dbReference>
<dbReference type="InterPro" id="IPR029034">
    <property type="entry name" value="Cystine-knot_cytokine"/>
</dbReference>
<dbReference type="InterPro" id="IPR001318">
    <property type="entry name" value="Inhibin_betaC"/>
</dbReference>
<dbReference type="InterPro" id="IPR001839">
    <property type="entry name" value="TGF-b_C"/>
</dbReference>
<dbReference type="InterPro" id="IPR015615">
    <property type="entry name" value="TGF-beta-rel"/>
</dbReference>
<dbReference type="InterPro" id="IPR017948">
    <property type="entry name" value="TGFb_CS"/>
</dbReference>
<dbReference type="PANTHER" id="PTHR11848:SF6">
    <property type="entry name" value="INHIBIN BETA E CHAIN"/>
    <property type="match status" value="1"/>
</dbReference>
<dbReference type="PANTHER" id="PTHR11848">
    <property type="entry name" value="TGF-BETA FAMILY"/>
    <property type="match status" value="1"/>
</dbReference>
<dbReference type="Pfam" id="PF00019">
    <property type="entry name" value="TGF_beta"/>
    <property type="match status" value="1"/>
</dbReference>
<dbReference type="PRINTS" id="PR00672">
    <property type="entry name" value="INHIBINBC"/>
</dbReference>
<dbReference type="SMART" id="SM00204">
    <property type="entry name" value="TGFB"/>
    <property type="match status" value="1"/>
</dbReference>
<dbReference type="SUPFAM" id="SSF57501">
    <property type="entry name" value="Cystine-knot cytokines"/>
    <property type="match status" value="1"/>
</dbReference>
<dbReference type="PROSITE" id="PS00250">
    <property type="entry name" value="TGF_BETA_1"/>
    <property type="match status" value="1"/>
</dbReference>
<dbReference type="PROSITE" id="PS51362">
    <property type="entry name" value="TGF_BETA_2"/>
    <property type="match status" value="1"/>
</dbReference>
<keyword id="KW-0165">Cleavage on pair of basic residues</keyword>
<keyword id="KW-1015">Disulfide bond</keyword>
<keyword id="KW-0325">Glycoprotein</keyword>
<keyword id="KW-0339">Growth factor</keyword>
<keyword id="KW-0372">Hormone</keyword>
<keyword id="KW-1267">Proteomics identification</keyword>
<keyword id="KW-1185">Reference proteome</keyword>
<keyword id="KW-0964">Secreted</keyword>
<keyword id="KW-0732">Signal</keyword>
<organism>
    <name type="scientific">Homo sapiens</name>
    <name type="common">Human</name>
    <dbReference type="NCBI Taxonomy" id="9606"/>
    <lineage>
        <taxon>Eukaryota</taxon>
        <taxon>Metazoa</taxon>
        <taxon>Chordata</taxon>
        <taxon>Craniata</taxon>
        <taxon>Vertebrata</taxon>
        <taxon>Euteleostomi</taxon>
        <taxon>Mammalia</taxon>
        <taxon>Eutheria</taxon>
        <taxon>Euarchontoglires</taxon>
        <taxon>Primates</taxon>
        <taxon>Haplorrhini</taxon>
        <taxon>Catarrhini</taxon>
        <taxon>Hominidae</taxon>
        <taxon>Homo</taxon>
    </lineage>
</organism>
<feature type="signal peptide" evidence="4">
    <location>
        <begin position="1"/>
        <end position="19"/>
    </location>
</feature>
<feature type="propeptide" id="PRO_0000033736" evidence="4">
    <location>
        <begin position="20"/>
        <end position="236"/>
    </location>
</feature>
<feature type="chain" id="PRO_0000033737" description="Inhibin beta E chain">
    <location>
        <begin position="237"/>
        <end position="350"/>
    </location>
</feature>
<feature type="glycosylation site" description="N-linked (GlcNAc...) asparagine" evidence="6">
    <location>
        <position position="198"/>
    </location>
</feature>
<feature type="disulfide bond" evidence="1">
    <location>
        <begin position="240"/>
        <end position="248"/>
    </location>
</feature>
<feature type="disulfide bond" evidence="1">
    <location>
        <begin position="247"/>
        <end position="315"/>
    </location>
</feature>
<feature type="disulfide bond" evidence="1">
    <location>
        <begin position="276"/>
        <end position="347"/>
    </location>
</feature>
<feature type="disulfide bond" evidence="1">
    <location>
        <begin position="280"/>
        <end position="349"/>
    </location>
</feature>
<feature type="disulfide bond" description="Interchain" evidence="1">
    <location>
        <position position="314"/>
    </location>
</feature>
<feature type="sequence variant" id="VAR_036198" description="In a breast cancer sample; somatic mutation." evidence="5">
    <original>R</original>
    <variation>T</variation>
    <location>
        <position position="62"/>
    </location>
</feature>
<feature type="sequence variant" id="VAR_036199" description="In a breast cancer sample; somatic mutation." evidence="5">
    <original>Q</original>
    <variation>H</variation>
    <location>
        <position position="215"/>
    </location>
</feature>